<dbReference type="PIR" id="A02409">
    <property type="entry name" value="HBOZ"/>
</dbReference>
<dbReference type="SMR" id="P02093"/>
<dbReference type="GO" id="GO:0072562">
    <property type="term" value="C:blood microparticle"/>
    <property type="evidence" value="ECO:0007669"/>
    <property type="project" value="TreeGrafter"/>
</dbReference>
<dbReference type="GO" id="GO:0031838">
    <property type="term" value="C:haptoglobin-hemoglobin complex"/>
    <property type="evidence" value="ECO:0007669"/>
    <property type="project" value="TreeGrafter"/>
</dbReference>
<dbReference type="GO" id="GO:0005833">
    <property type="term" value="C:hemoglobin complex"/>
    <property type="evidence" value="ECO:0007669"/>
    <property type="project" value="InterPro"/>
</dbReference>
<dbReference type="GO" id="GO:0031720">
    <property type="term" value="F:haptoglobin binding"/>
    <property type="evidence" value="ECO:0007669"/>
    <property type="project" value="TreeGrafter"/>
</dbReference>
<dbReference type="GO" id="GO:0020037">
    <property type="term" value="F:heme binding"/>
    <property type="evidence" value="ECO:0007669"/>
    <property type="project" value="InterPro"/>
</dbReference>
<dbReference type="GO" id="GO:0031721">
    <property type="term" value="F:hemoglobin alpha binding"/>
    <property type="evidence" value="ECO:0007669"/>
    <property type="project" value="TreeGrafter"/>
</dbReference>
<dbReference type="GO" id="GO:0046872">
    <property type="term" value="F:metal ion binding"/>
    <property type="evidence" value="ECO:0007669"/>
    <property type="project" value="UniProtKB-KW"/>
</dbReference>
<dbReference type="GO" id="GO:0043177">
    <property type="term" value="F:organic acid binding"/>
    <property type="evidence" value="ECO:0007669"/>
    <property type="project" value="TreeGrafter"/>
</dbReference>
<dbReference type="GO" id="GO:0019825">
    <property type="term" value="F:oxygen binding"/>
    <property type="evidence" value="ECO:0007669"/>
    <property type="project" value="InterPro"/>
</dbReference>
<dbReference type="GO" id="GO:0005344">
    <property type="term" value="F:oxygen carrier activity"/>
    <property type="evidence" value="ECO:0007669"/>
    <property type="project" value="UniProtKB-KW"/>
</dbReference>
<dbReference type="GO" id="GO:0004601">
    <property type="term" value="F:peroxidase activity"/>
    <property type="evidence" value="ECO:0007669"/>
    <property type="project" value="TreeGrafter"/>
</dbReference>
<dbReference type="GO" id="GO:0042744">
    <property type="term" value="P:hydrogen peroxide catabolic process"/>
    <property type="evidence" value="ECO:0007669"/>
    <property type="project" value="TreeGrafter"/>
</dbReference>
<dbReference type="CDD" id="cd08925">
    <property type="entry name" value="Hb-beta-like"/>
    <property type="match status" value="1"/>
</dbReference>
<dbReference type="FunFam" id="1.10.490.10:FF:000001">
    <property type="entry name" value="Hemoglobin subunit beta"/>
    <property type="match status" value="1"/>
</dbReference>
<dbReference type="Gene3D" id="1.10.490.10">
    <property type="entry name" value="Globins"/>
    <property type="match status" value="1"/>
</dbReference>
<dbReference type="InterPro" id="IPR000971">
    <property type="entry name" value="Globin"/>
</dbReference>
<dbReference type="InterPro" id="IPR009050">
    <property type="entry name" value="Globin-like_sf"/>
</dbReference>
<dbReference type="InterPro" id="IPR012292">
    <property type="entry name" value="Globin/Proto"/>
</dbReference>
<dbReference type="InterPro" id="IPR002337">
    <property type="entry name" value="Hemoglobin_b"/>
</dbReference>
<dbReference type="InterPro" id="IPR050056">
    <property type="entry name" value="Hemoglobin_oxygen_transport"/>
</dbReference>
<dbReference type="PANTHER" id="PTHR11442">
    <property type="entry name" value="HEMOGLOBIN FAMILY MEMBER"/>
    <property type="match status" value="1"/>
</dbReference>
<dbReference type="PANTHER" id="PTHR11442:SF42">
    <property type="entry name" value="HEMOGLOBIN SUBUNIT BETA"/>
    <property type="match status" value="1"/>
</dbReference>
<dbReference type="Pfam" id="PF00042">
    <property type="entry name" value="Globin"/>
    <property type="match status" value="1"/>
</dbReference>
<dbReference type="PRINTS" id="PR00814">
    <property type="entry name" value="BETAHAEM"/>
</dbReference>
<dbReference type="SUPFAM" id="SSF46458">
    <property type="entry name" value="Globin-like"/>
    <property type="match status" value="1"/>
</dbReference>
<dbReference type="PROSITE" id="PS01033">
    <property type="entry name" value="GLOBIN"/>
    <property type="match status" value="1"/>
</dbReference>
<comment type="function">
    <text>Involved in oxygen transport from the lung to the various peripheral tissues.</text>
</comment>
<comment type="subunit">
    <text>Heterotetramer of two alpha chains and two beta chains.</text>
</comment>
<comment type="tissue specificity">
    <text>Red blood cells.</text>
</comment>
<comment type="similarity">
    <text evidence="3">Belongs to the globin family.</text>
</comment>
<gene>
    <name type="primary">HBB</name>
</gene>
<protein>
    <recommendedName>
        <fullName>Hemoglobin subunit beta</fullName>
    </recommendedName>
    <alternativeName>
        <fullName>Beta-globin</fullName>
    </alternativeName>
    <alternativeName>
        <fullName>Hemoglobin beta chain</fullName>
    </alternativeName>
</protein>
<accession>P02093</accession>
<evidence type="ECO:0000250" key="1">
    <source>
        <dbReference type="UniProtKB" id="P02086"/>
    </source>
</evidence>
<evidence type="ECO:0000250" key="2">
    <source>
        <dbReference type="UniProtKB" id="P68871"/>
    </source>
</evidence>
<evidence type="ECO:0000255" key="3">
    <source>
        <dbReference type="PROSITE-ProRule" id="PRU00238"/>
    </source>
</evidence>
<organism>
    <name type="scientific">Ondatra zibethicus</name>
    <name type="common">Muskrat</name>
    <dbReference type="NCBI Taxonomy" id="10060"/>
    <lineage>
        <taxon>Eukaryota</taxon>
        <taxon>Metazoa</taxon>
        <taxon>Chordata</taxon>
        <taxon>Craniata</taxon>
        <taxon>Vertebrata</taxon>
        <taxon>Euteleostomi</taxon>
        <taxon>Mammalia</taxon>
        <taxon>Eutheria</taxon>
        <taxon>Euarchontoglires</taxon>
        <taxon>Glires</taxon>
        <taxon>Rodentia</taxon>
        <taxon>Myomorpha</taxon>
        <taxon>Muroidea</taxon>
        <taxon>Cricetidae</taxon>
        <taxon>Arvicolinae</taxon>
        <taxon>Ondatra</taxon>
    </lineage>
</organism>
<proteinExistence type="evidence at protein level"/>
<feature type="chain" id="PRO_0000053041" description="Hemoglobin subunit beta">
    <location>
        <begin position="1"/>
        <end position="146"/>
    </location>
</feature>
<feature type="domain" description="Globin" evidence="3">
    <location>
        <begin position="2"/>
        <end position="146"/>
    </location>
</feature>
<feature type="binding site" description="distal binding residue">
    <location>
        <position position="63"/>
    </location>
    <ligand>
        <name>heme b</name>
        <dbReference type="ChEBI" id="CHEBI:60344"/>
    </ligand>
    <ligandPart>
        <name>Fe</name>
        <dbReference type="ChEBI" id="CHEBI:18248"/>
    </ligandPart>
</feature>
<feature type="binding site" description="proximal binding residue">
    <location>
        <position position="92"/>
    </location>
    <ligand>
        <name>heme b</name>
        <dbReference type="ChEBI" id="CHEBI:60344"/>
    </ligand>
    <ligandPart>
        <name>Fe</name>
        <dbReference type="ChEBI" id="CHEBI:18248"/>
    </ligandPart>
</feature>
<feature type="modified residue" description="N-acetylvaline" evidence="1">
    <location>
        <position position="1"/>
    </location>
</feature>
<feature type="modified residue" description="N6-acetyllysine" evidence="2">
    <location>
        <position position="59"/>
    </location>
</feature>
<feature type="modified residue" description="N6-acetyllysine" evidence="2">
    <location>
        <position position="82"/>
    </location>
</feature>
<feature type="modified residue" description="S-nitrosocysteine" evidence="2">
    <location>
        <position position="93"/>
    </location>
</feature>
<feature type="modified residue" description="N6-acetyllysine" evidence="2">
    <location>
        <position position="144"/>
    </location>
</feature>
<name>HBB_ONDZI</name>
<sequence>VHLTDAEKAAISGLWGKVNADGVGAEALGRLLVVYPWTQRFFEHFGDLSSSSAVMGNAKVKSHGKKVITAFADGLKHLDNLKGTFSALSELHCDKLHVDPENFKLLGNMIVIVLSHDLGKDFTPDAQSAFQKVVTGVATALGHKYH</sequence>
<reference key="1">
    <citation type="journal article" date="1983" name="Hoppe-Seyler's Z. Physiol. Chem.">
        <title>Primary structure of hemoglobins of the musk rat (Ondatra zibethica, Rodentia).</title>
        <authorList>
            <person name="Bieber F.A."/>
            <person name="Braunitzer G."/>
        </authorList>
    </citation>
    <scope>PROTEIN SEQUENCE</scope>
</reference>
<reference key="2">
    <citation type="journal article" date="1987" name="Biol. Chem. Hoppe-Seyler">
        <title>Hemoglobin sequences.</title>
        <authorList>
            <person name="Kleinschmidt T."/>
            <person name="Sgouros J.G."/>
        </authorList>
    </citation>
    <scope>SEQUENCE REVISION TO 39</scope>
</reference>
<keyword id="KW-0007">Acetylation</keyword>
<keyword id="KW-0903">Direct protein sequencing</keyword>
<keyword id="KW-0349">Heme</keyword>
<keyword id="KW-0408">Iron</keyword>
<keyword id="KW-0479">Metal-binding</keyword>
<keyword id="KW-0561">Oxygen transport</keyword>
<keyword id="KW-0702">S-nitrosylation</keyword>
<keyword id="KW-0813">Transport</keyword>